<protein>
    <recommendedName>
        <fullName evidence="1">Ribosomal RNA small subunit methyltransferase A</fullName>
        <ecNumber evidence="1">2.1.1.182</ecNumber>
    </recommendedName>
    <alternativeName>
        <fullName evidence="1">16S rRNA (adenine(1518)-N(6)/adenine(1519)-N(6))-dimethyltransferase</fullName>
    </alternativeName>
    <alternativeName>
        <fullName evidence="1">16S rRNA dimethyladenosine transferase</fullName>
    </alternativeName>
    <alternativeName>
        <fullName evidence="1">16S rRNA dimethylase</fullName>
    </alternativeName>
    <alternativeName>
        <fullName evidence="1">S-adenosylmethionine-6-N', N'-adenosyl(rRNA) dimethyltransferase</fullName>
    </alternativeName>
</protein>
<name>RSMA_LEVBA</name>
<organism>
    <name type="scientific">Levilactobacillus brevis (strain ATCC 367 / BCRC 12310 / CIP 105137 / JCM 1170 / LMG 11437 / NCIMB 947 / NCTC 947)</name>
    <name type="common">Lactobacillus brevis</name>
    <dbReference type="NCBI Taxonomy" id="387344"/>
    <lineage>
        <taxon>Bacteria</taxon>
        <taxon>Bacillati</taxon>
        <taxon>Bacillota</taxon>
        <taxon>Bacilli</taxon>
        <taxon>Lactobacillales</taxon>
        <taxon>Lactobacillaceae</taxon>
        <taxon>Levilactobacillus</taxon>
    </lineage>
</organism>
<accession>Q03T56</accession>
<comment type="function">
    <text evidence="1">Specifically dimethylates two adjacent adenosines (A1518 and A1519) in the loop of a conserved hairpin near the 3'-end of 16S rRNA in the 30S particle. May play a critical role in biogenesis of 30S subunits.</text>
</comment>
<comment type="catalytic activity">
    <reaction evidence="1">
        <text>adenosine(1518)/adenosine(1519) in 16S rRNA + 4 S-adenosyl-L-methionine = N(6)-dimethyladenosine(1518)/N(6)-dimethyladenosine(1519) in 16S rRNA + 4 S-adenosyl-L-homocysteine + 4 H(+)</text>
        <dbReference type="Rhea" id="RHEA:19609"/>
        <dbReference type="Rhea" id="RHEA-COMP:10232"/>
        <dbReference type="Rhea" id="RHEA-COMP:10233"/>
        <dbReference type="ChEBI" id="CHEBI:15378"/>
        <dbReference type="ChEBI" id="CHEBI:57856"/>
        <dbReference type="ChEBI" id="CHEBI:59789"/>
        <dbReference type="ChEBI" id="CHEBI:74411"/>
        <dbReference type="ChEBI" id="CHEBI:74493"/>
        <dbReference type="EC" id="2.1.1.182"/>
    </reaction>
</comment>
<comment type="subcellular location">
    <subcellularLocation>
        <location evidence="1">Cytoplasm</location>
    </subcellularLocation>
</comment>
<comment type="similarity">
    <text evidence="1">Belongs to the class I-like SAM-binding methyltransferase superfamily. rRNA adenine N(6)-methyltransferase family. RsmA subfamily.</text>
</comment>
<evidence type="ECO:0000255" key="1">
    <source>
        <dbReference type="HAMAP-Rule" id="MF_00607"/>
    </source>
</evidence>
<dbReference type="EC" id="2.1.1.182" evidence="1"/>
<dbReference type="EMBL" id="CP000416">
    <property type="protein sequence ID" value="ABJ63616.1"/>
    <property type="molecule type" value="Genomic_DNA"/>
</dbReference>
<dbReference type="RefSeq" id="WP_011667242.1">
    <property type="nucleotide sequence ID" value="NC_008497.1"/>
</dbReference>
<dbReference type="SMR" id="Q03T56"/>
<dbReference type="STRING" id="387344.LVIS_0458"/>
<dbReference type="GeneID" id="56992268"/>
<dbReference type="KEGG" id="lbr:LVIS_0458"/>
<dbReference type="eggNOG" id="COG0030">
    <property type="taxonomic scope" value="Bacteria"/>
</dbReference>
<dbReference type="HOGENOM" id="CLU_041220_0_0_9"/>
<dbReference type="Proteomes" id="UP000001652">
    <property type="component" value="Chromosome"/>
</dbReference>
<dbReference type="GO" id="GO:0005829">
    <property type="term" value="C:cytosol"/>
    <property type="evidence" value="ECO:0007669"/>
    <property type="project" value="TreeGrafter"/>
</dbReference>
<dbReference type="GO" id="GO:0052908">
    <property type="term" value="F:16S rRNA (adenine(1518)-N(6)/adenine(1519)-N(6))-dimethyltransferase activity"/>
    <property type="evidence" value="ECO:0007669"/>
    <property type="project" value="UniProtKB-EC"/>
</dbReference>
<dbReference type="GO" id="GO:0003723">
    <property type="term" value="F:RNA binding"/>
    <property type="evidence" value="ECO:0007669"/>
    <property type="project" value="UniProtKB-KW"/>
</dbReference>
<dbReference type="CDD" id="cd02440">
    <property type="entry name" value="AdoMet_MTases"/>
    <property type="match status" value="1"/>
</dbReference>
<dbReference type="FunFam" id="3.40.50.150:FF:000023">
    <property type="entry name" value="Ribosomal RNA small subunit methyltransferase A"/>
    <property type="match status" value="1"/>
</dbReference>
<dbReference type="Gene3D" id="1.10.8.100">
    <property type="entry name" value="Ribosomal RNA adenine dimethylase-like, domain 2"/>
    <property type="match status" value="1"/>
</dbReference>
<dbReference type="Gene3D" id="3.40.50.150">
    <property type="entry name" value="Vaccinia Virus protein VP39"/>
    <property type="match status" value="1"/>
</dbReference>
<dbReference type="HAMAP" id="MF_00607">
    <property type="entry name" value="16SrRNA_methyltr_A"/>
    <property type="match status" value="1"/>
</dbReference>
<dbReference type="InterPro" id="IPR001737">
    <property type="entry name" value="KsgA/Erm"/>
</dbReference>
<dbReference type="InterPro" id="IPR023165">
    <property type="entry name" value="rRNA_Ade_diMease-like_C"/>
</dbReference>
<dbReference type="InterPro" id="IPR020596">
    <property type="entry name" value="rRNA_Ade_Mease_Trfase_CS"/>
</dbReference>
<dbReference type="InterPro" id="IPR020598">
    <property type="entry name" value="rRNA_Ade_methylase_Trfase_N"/>
</dbReference>
<dbReference type="InterPro" id="IPR011530">
    <property type="entry name" value="rRNA_adenine_dimethylase"/>
</dbReference>
<dbReference type="InterPro" id="IPR029063">
    <property type="entry name" value="SAM-dependent_MTases_sf"/>
</dbReference>
<dbReference type="NCBIfam" id="TIGR00755">
    <property type="entry name" value="ksgA"/>
    <property type="match status" value="1"/>
</dbReference>
<dbReference type="PANTHER" id="PTHR11727">
    <property type="entry name" value="DIMETHYLADENOSINE TRANSFERASE"/>
    <property type="match status" value="1"/>
</dbReference>
<dbReference type="PANTHER" id="PTHR11727:SF7">
    <property type="entry name" value="DIMETHYLADENOSINE TRANSFERASE-RELATED"/>
    <property type="match status" value="1"/>
</dbReference>
<dbReference type="Pfam" id="PF00398">
    <property type="entry name" value="RrnaAD"/>
    <property type="match status" value="1"/>
</dbReference>
<dbReference type="SMART" id="SM00650">
    <property type="entry name" value="rADc"/>
    <property type="match status" value="1"/>
</dbReference>
<dbReference type="SUPFAM" id="SSF53335">
    <property type="entry name" value="S-adenosyl-L-methionine-dependent methyltransferases"/>
    <property type="match status" value="1"/>
</dbReference>
<dbReference type="PROSITE" id="PS01131">
    <property type="entry name" value="RRNA_A_DIMETH"/>
    <property type="match status" value="1"/>
</dbReference>
<dbReference type="PROSITE" id="PS51689">
    <property type="entry name" value="SAM_RNA_A_N6_MT"/>
    <property type="match status" value="1"/>
</dbReference>
<gene>
    <name evidence="1" type="primary">rsmA</name>
    <name evidence="1" type="synonym">ksgA</name>
    <name type="ordered locus">LVIS_0458</name>
</gene>
<feature type="chain" id="PRO_1000056629" description="Ribosomal RNA small subunit methyltransferase A">
    <location>
        <begin position="1"/>
        <end position="296"/>
    </location>
</feature>
<feature type="binding site" evidence="1">
    <location>
        <position position="32"/>
    </location>
    <ligand>
        <name>S-adenosyl-L-methionine</name>
        <dbReference type="ChEBI" id="CHEBI:59789"/>
    </ligand>
</feature>
<feature type="binding site" evidence="1">
    <location>
        <position position="34"/>
    </location>
    <ligand>
        <name>S-adenosyl-L-methionine</name>
        <dbReference type="ChEBI" id="CHEBI:59789"/>
    </ligand>
</feature>
<feature type="binding site" evidence="1">
    <location>
        <position position="59"/>
    </location>
    <ligand>
        <name>S-adenosyl-L-methionine</name>
        <dbReference type="ChEBI" id="CHEBI:59789"/>
    </ligand>
</feature>
<feature type="binding site" evidence="1">
    <location>
        <position position="80"/>
    </location>
    <ligand>
        <name>S-adenosyl-L-methionine</name>
        <dbReference type="ChEBI" id="CHEBI:59789"/>
    </ligand>
</feature>
<feature type="binding site" evidence="1">
    <location>
        <position position="105"/>
    </location>
    <ligand>
        <name>S-adenosyl-L-methionine</name>
        <dbReference type="ChEBI" id="CHEBI:59789"/>
    </ligand>
</feature>
<feature type="binding site" evidence="1">
    <location>
        <position position="130"/>
    </location>
    <ligand>
        <name>S-adenosyl-L-methionine</name>
        <dbReference type="ChEBI" id="CHEBI:59789"/>
    </ligand>
</feature>
<reference key="1">
    <citation type="journal article" date="2006" name="Proc. Natl. Acad. Sci. U.S.A.">
        <title>Comparative genomics of the lactic acid bacteria.</title>
        <authorList>
            <person name="Makarova K.S."/>
            <person name="Slesarev A."/>
            <person name="Wolf Y.I."/>
            <person name="Sorokin A."/>
            <person name="Mirkin B."/>
            <person name="Koonin E.V."/>
            <person name="Pavlov A."/>
            <person name="Pavlova N."/>
            <person name="Karamychev V."/>
            <person name="Polouchine N."/>
            <person name="Shakhova V."/>
            <person name="Grigoriev I."/>
            <person name="Lou Y."/>
            <person name="Rohksar D."/>
            <person name="Lucas S."/>
            <person name="Huang K."/>
            <person name="Goodstein D.M."/>
            <person name="Hawkins T."/>
            <person name="Plengvidhya V."/>
            <person name="Welker D."/>
            <person name="Hughes J."/>
            <person name="Goh Y."/>
            <person name="Benson A."/>
            <person name="Baldwin K."/>
            <person name="Lee J.-H."/>
            <person name="Diaz-Muniz I."/>
            <person name="Dosti B."/>
            <person name="Smeianov V."/>
            <person name="Wechter W."/>
            <person name="Barabote R."/>
            <person name="Lorca G."/>
            <person name="Altermann E."/>
            <person name="Barrangou R."/>
            <person name="Ganesan B."/>
            <person name="Xie Y."/>
            <person name="Rawsthorne H."/>
            <person name="Tamir D."/>
            <person name="Parker C."/>
            <person name="Breidt F."/>
            <person name="Broadbent J.R."/>
            <person name="Hutkins R."/>
            <person name="O'Sullivan D."/>
            <person name="Steele J."/>
            <person name="Unlu G."/>
            <person name="Saier M.H. Jr."/>
            <person name="Klaenhammer T."/>
            <person name="Richardson P."/>
            <person name="Kozyavkin S."/>
            <person name="Weimer B.C."/>
            <person name="Mills D.A."/>
        </authorList>
    </citation>
    <scope>NUCLEOTIDE SEQUENCE [LARGE SCALE GENOMIC DNA]</scope>
    <source>
        <strain>ATCC 367 / BCRC 12310 / CIP 105137 / JCM 1170 / LMG 11437 / NCIMB 947 / NCTC 947</strain>
    </source>
</reference>
<keyword id="KW-0963">Cytoplasm</keyword>
<keyword id="KW-0489">Methyltransferase</keyword>
<keyword id="KW-1185">Reference proteome</keyword>
<keyword id="KW-0694">RNA-binding</keyword>
<keyword id="KW-0698">rRNA processing</keyword>
<keyword id="KW-0949">S-adenosyl-L-methionine</keyword>
<keyword id="KW-0808">Transferase</keyword>
<sequence length="296" mass="33193">MTNELPEIGSPARTKAILNRYRLVAKKSLGQNFLSDLNILRNIVAAGDVNDHDNVIEIGPGIGALTEQIAKRAHKVVAFEIDENLLPVLDETLMDYKNVKIINEDILKANLPAVVADEFEADRPLKLVANLPYYITTPILMGVLQSTVRFEAIVVMMQAEVAERLVAEPGTKAYGSLSVIMQYRAHVEIAFNVPRTAFIPQPNVDSAIIRLTPREALPVNPYEDKALFSFVKGCFAHRRKSLWNNLQGIFGKQPEVRERIETVLNQTGISRQLRPERLTLLNFIELTNAFHNEGLM</sequence>
<proteinExistence type="inferred from homology"/>